<proteinExistence type="inferred from homology"/>
<protein>
    <recommendedName>
        <fullName evidence="1">ATP-dependent helicase/nuclease subunit A</fullName>
        <ecNumber evidence="1">3.1.-.-</ecNumber>
        <ecNumber evidence="1">5.6.2.4</ecNumber>
    </recommendedName>
    <alternativeName>
        <fullName evidence="1">ATP-dependent helicase/nuclease AddA</fullName>
    </alternativeName>
    <alternativeName>
        <fullName evidence="1">DNA 3'-5' helicase AddA</fullName>
    </alternativeName>
</protein>
<evidence type="ECO:0000255" key="1">
    <source>
        <dbReference type="HAMAP-Rule" id="MF_01451"/>
    </source>
</evidence>
<sequence>MSEVKLTPEQNEAIHSSGKNILVSASAGSGKTFVMAQRIVEKVKQGIEIDRLFISTFTKKAASELRMRLERDLKKARQESSDENQACRLTLALQNLSNADIGTMDSFTQKLTKTNFNRVNIDPNFRILADQTESDLIRQEVFEQLVESYLSGDDGLNISKEKFEELIKNFSKDRNIAGFQKVVYTIYRFASATENPIKWLENQFLKGFETYKSLIDLSADFSADIKENLLIFFELLETSLTNGVVAKKGAGRDKANLILDNKNELLEAITTKDFATFTELFLSIDTDIRVGSSKDEILSALKKDFSVQKQDLVGSKSKPGEIRKFVDKIKHGQLIEKYQNQAFEIAENLQKFVIEFYQSYLERKKNENAFEYSDIAHFAIEILEENPDIRETLREHYDEIMIDEYQDTSHTQERMLELLSNGHNLFMVGDIKQSIYGFRLADPGLFLEKYKDYAKTENPNQLIRLKENFRSRGEVLTFTNDIFKHLMDEKLGEMTYGKEEALVQGNITDYPVESEKDFYPELLLYKENTSDEETDESEVRISDGEIKGAAQEIKKLIEAGVEPKDIAILVRSKSNNNKIEDILLSYDIPVVLDEGRVDFLKSMEVLIMLDVLRAIDNPLYDLSLVAMLRSPLFGFNEDELTRISTQGSHDLRFWDKILLSLNKEGQNPELINPSLENKLKAFYKKFTEWRKLVNQVAIHDLLWKIYTETYYFDYVGALKNGEIRQANLQALAVRAESYESSGYKGLFKFVRLINKFMEQNNDLASVNIKLPQSAVRVMTFHKSKGLEFDYVFLMNLQSRFNDRDLKENVILSRENGLGMKLIADLKDEADVITDFPYALVKMETFPYMVNKDLKQRAALSEEMRVLYVAFTRAKKKLYLVGKIKETDKKSGLDLYDNASLEGKILEDKFRNSSRGFQHWILALQNATKLPIKLNVYTKEELEAEKLEFTSQPDFKKLVEESEKFDNIMAHSDEIQKAQKIMNYEYPHQAATELSSIQTPSQVKKRSYEKQLQVGEIQPKSEFTRVKKLDFSDFGPKKVTAAEIGSATHSFMQYADFSQADLFSFQATLDEMGFDEKIKNQIDIAKILTLFDTDFGQFLSENVDKTVKEAPFSMLRTDEFAKEQYIVRGICDGFVKLTDKIVLFDYKTDRFTSSSAISEIKERYRDQMNLYSEALKKAYDVNQVDKYLILLGGPQQVFVEKLDD</sequence>
<name>ADDA_LACLA</name>
<reference key="1">
    <citation type="journal article" date="2001" name="Genome Res.">
        <title>The complete genome sequence of the lactic acid bacterium Lactococcus lactis ssp. lactis IL1403.</title>
        <authorList>
            <person name="Bolotin A."/>
            <person name="Wincker P."/>
            <person name="Mauger S."/>
            <person name="Jaillon O."/>
            <person name="Malarme K."/>
            <person name="Weissenbach J."/>
            <person name="Ehrlich S.D."/>
            <person name="Sorokin A."/>
        </authorList>
    </citation>
    <scope>NUCLEOTIDE SEQUENCE [LARGE SCALE GENOMIC DNA]</scope>
    <source>
        <strain>IL1403</strain>
    </source>
</reference>
<comment type="function">
    <text evidence="1">The heterodimer acts as both an ATP-dependent DNA helicase and an ATP-dependent, dual-direction single-stranded exonuclease. Recognizes the chi site generating a DNA molecule suitable for the initiation of homologous recombination. The AddA nuclease domain is required for chi fragment generation; this subunit has the helicase and 3' -&gt; 5' nuclease activities.</text>
</comment>
<comment type="catalytic activity">
    <reaction evidence="1">
        <text>Couples ATP hydrolysis with the unwinding of duplex DNA by translocating in the 3'-5' direction.</text>
        <dbReference type="EC" id="5.6.2.4"/>
    </reaction>
</comment>
<comment type="catalytic activity">
    <reaction evidence="1">
        <text>ATP + H2O = ADP + phosphate + H(+)</text>
        <dbReference type="Rhea" id="RHEA:13065"/>
        <dbReference type="ChEBI" id="CHEBI:15377"/>
        <dbReference type="ChEBI" id="CHEBI:15378"/>
        <dbReference type="ChEBI" id="CHEBI:30616"/>
        <dbReference type="ChEBI" id="CHEBI:43474"/>
        <dbReference type="ChEBI" id="CHEBI:456216"/>
        <dbReference type="EC" id="5.6.2.4"/>
    </reaction>
</comment>
<comment type="cofactor">
    <cofactor evidence="1">
        <name>Mg(2+)</name>
        <dbReference type="ChEBI" id="CHEBI:18420"/>
    </cofactor>
</comment>
<comment type="subunit">
    <text evidence="1">Heterodimer of AddA and AddB/RexB.</text>
</comment>
<comment type="similarity">
    <text evidence="1">Belongs to the helicase family. AddA subfamily.</text>
</comment>
<gene>
    <name evidence="1" type="primary">addA</name>
    <name type="synonym">rexA</name>
    <name type="ordered locus">LL0004</name>
    <name type="ORF">L025</name>
    <name type="ORF">L0251</name>
</gene>
<dbReference type="EC" id="3.1.-.-" evidence="1"/>
<dbReference type="EC" id="5.6.2.4" evidence="1"/>
<dbReference type="EMBL" id="AE005176">
    <property type="protein sequence ID" value="AAK04102.1"/>
    <property type="molecule type" value="Genomic_DNA"/>
</dbReference>
<dbReference type="PIR" id="D86625">
    <property type="entry name" value="D86625"/>
</dbReference>
<dbReference type="RefSeq" id="NP_266160.1">
    <property type="nucleotide sequence ID" value="NC_002662.1"/>
</dbReference>
<dbReference type="RefSeq" id="WP_010905024.1">
    <property type="nucleotide sequence ID" value="NC_002662.1"/>
</dbReference>
<dbReference type="SMR" id="Q9CJI9"/>
<dbReference type="PaxDb" id="272623-L0251"/>
<dbReference type="EnsemblBacteria" id="AAK04102">
    <property type="protein sequence ID" value="AAK04102"/>
    <property type="gene ID" value="L0251"/>
</dbReference>
<dbReference type="KEGG" id="lla:L0251"/>
<dbReference type="PATRIC" id="fig|272623.7.peg.4"/>
<dbReference type="eggNOG" id="COG1074">
    <property type="taxonomic scope" value="Bacteria"/>
</dbReference>
<dbReference type="HOGENOM" id="CLU_001114_3_1_9"/>
<dbReference type="OrthoDB" id="9810135at2"/>
<dbReference type="Proteomes" id="UP000002196">
    <property type="component" value="Chromosome"/>
</dbReference>
<dbReference type="GO" id="GO:0005829">
    <property type="term" value="C:cytosol"/>
    <property type="evidence" value="ECO:0007669"/>
    <property type="project" value="TreeGrafter"/>
</dbReference>
<dbReference type="GO" id="GO:0033202">
    <property type="term" value="C:DNA helicase complex"/>
    <property type="evidence" value="ECO:0007669"/>
    <property type="project" value="TreeGrafter"/>
</dbReference>
<dbReference type="GO" id="GO:0043138">
    <property type="term" value="F:3'-5' DNA helicase activity"/>
    <property type="evidence" value="ECO:0007669"/>
    <property type="project" value="UniProtKB-UniRule"/>
</dbReference>
<dbReference type="GO" id="GO:0008408">
    <property type="term" value="F:3'-5' exonuclease activity"/>
    <property type="evidence" value="ECO:0007669"/>
    <property type="project" value="UniProtKB-UniRule"/>
</dbReference>
<dbReference type="GO" id="GO:0005524">
    <property type="term" value="F:ATP binding"/>
    <property type="evidence" value="ECO:0007669"/>
    <property type="project" value="UniProtKB-UniRule"/>
</dbReference>
<dbReference type="GO" id="GO:0016887">
    <property type="term" value="F:ATP hydrolysis activity"/>
    <property type="evidence" value="ECO:0007669"/>
    <property type="project" value="RHEA"/>
</dbReference>
<dbReference type="GO" id="GO:0003690">
    <property type="term" value="F:double-stranded DNA binding"/>
    <property type="evidence" value="ECO:0007669"/>
    <property type="project" value="UniProtKB-UniRule"/>
</dbReference>
<dbReference type="GO" id="GO:0000724">
    <property type="term" value="P:double-strand break repair via homologous recombination"/>
    <property type="evidence" value="ECO:0007669"/>
    <property type="project" value="UniProtKB-UniRule"/>
</dbReference>
<dbReference type="CDD" id="cd17932">
    <property type="entry name" value="DEXQc_UvrD"/>
    <property type="match status" value="1"/>
</dbReference>
<dbReference type="Gene3D" id="1.10.10.160">
    <property type="match status" value="1"/>
</dbReference>
<dbReference type="Gene3D" id="3.90.320.10">
    <property type="match status" value="1"/>
</dbReference>
<dbReference type="Gene3D" id="3.40.50.300">
    <property type="entry name" value="P-loop containing nucleotide triphosphate hydrolases"/>
    <property type="match status" value="4"/>
</dbReference>
<dbReference type="Gene3D" id="1.10.486.10">
    <property type="entry name" value="PCRA, domain 4"/>
    <property type="match status" value="1"/>
</dbReference>
<dbReference type="HAMAP" id="MF_01451">
    <property type="entry name" value="AddA"/>
    <property type="match status" value="1"/>
</dbReference>
<dbReference type="InterPro" id="IPR014152">
    <property type="entry name" value="AddA"/>
</dbReference>
<dbReference type="InterPro" id="IPR013986">
    <property type="entry name" value="DExx_box_DNA_helicase_dom_sf"/>
</dbReference>
<dbReference type="InterPro" id="IPR014017">
    <property type="entry name" value="DNA_helicase_UvrD-like_C"/>
</dbReference>
<dbReference type="InterPro" id="IPR000212">
    <property type="entry name" value="DNA_helicase_UvrD/REP"/>
</dbReference>
<dbReference type="InterPro" id="IPR027417">
    <property type="entry name" value="P-loop_NTPase"/>
</dbReference>
<dbReference type="InterPro" id="IPR011604">
    <property type="entry name" value="PDDEXK-like_dom_sf"/>
</dbReference>
<dbReference type="InterPro" id="IPR011335">
    <property type="entry name" value="Restrct_endonuc-II-like"/>
</dbReference>
<dbReference type="InterPro" id="IPR014016">
    <property type="entry name" value="UvrD-like_ATP-bd"/>
</dbReference>
<dbReference type="NCBIfam" id="TIGR02785">
    <property type="entry name" value="addA_Gpos"/>
    <property type="match status" value="1"/>
</dbReference>
<dbReference type="PANTHER" id="PTHR11070:SF48">
    <property type="entry name" value="ATP-DEPENDENT HELICASE_NUCLEASE SUBUNIT A"/>
    <property type="match status" value="1"/>
</dbReference>
<dbReference type="PANTHER" id="PTHR11070">
    <property type="entry name" value="UVRD / RECB / PCRA DNA HELICASE FAMILY MEMBER"/>
    <property type="match status" value="1"/>
</dbReference>
<dbReference type="Pfam" id="PF00580">
    <property type="entry name" value="UvrD-helicase"/>
    <property type="match status" value="1"/>
</dbReference>
<dbReference type="Pfam" id="PF13361">
    <property type="entry name" value="UvrD_C"/>
    <property type="match status" value="1"/>
</dbReference>
<dbReference type="SUPFAM" id="SSF52540">
    <property type="entry name" value="P-loop containing nucleoside triphosphate hydrolases"/>
    <property type="match status" value="1"/>
</dbReference>
<dbReference type="SUPFAM" id="SSF52980">
    <property type="entry name" value="Restriction endonuclease-like"/>
    <property type="match status" value="1"/>
</dbReference>
<dbReference type="PROSITE" id="PS51198">
    <property type="entry name" value="UVRD_HELICASE_ATP_BIND"/>
    <property type="match status" value="1"/>
</dbReference>
<dbReference type="PROSITE" id="PS51217">
    <property type="entry name" value="UVRD_HELICASE_CTER"/>
    <property type="match status" value="1"/>
</dbReference>
<organism>
    <name type="scientific">Lactococcus lactis subsp. lactis (strain IL1403)</name>
    <name type="common">Streptococcus lactis</name>
    <dbReference type="NCBI Taxonomy" id="272623"/>
    <lineage>
        <taxon>Bacteria</taxon>
        <taxon>Bacillati</taxon>
        <taxon>Bacillota</taxon>
        <taxon>Bacilli</taxon>
        <taxon>Lactobacillales</taxon>
        <taxon>Streptococcaceae</taxon>
        <taxon>Lactococcus</taxon>
    </lineage>
</organism>
<accession>Q9CJI9</accession>
<keyword id="KW-0067">ATP-binding</keyword>
<keyword id="KW-0227">DNA damage</keyword>
<keyword id="KW-0234">DNA repair</keyword>
<keyword id="KW-0238">DNA-binding</keyword>
<keyword id="KW-0269">Exonuclease</keyword>
<keyword id="KW-0347">Helicase</keyword>
<keyword id="KW-0378">Hydrolase</keyword>
<keyword id="KW-0413">Isomerase</keyword>
<keyword id="KW-0540">Nuclease</keyword>
<keyword id="KW-0547">Nucleotide-binding</keyword>
<keyword id="KW-1185">Reference proteome</keyword>
<feature type="chain" id="PRO_0000379292" description="ATP-dependent helicase/nuclease subunit A">
    <location>
        <begin position="1"/>
        <end position="1203"/>
    </location>
</feature>
<feature type="domain" description="UvrD-like helicase ATP-binding" evidence="1">
    <location>
        <begin position="4"/>
        <end position="472"/>
    </location>
</feature>
<feature type="domain" description="UvrD-like helicase C-terminal" evidence="1">
    <location>
        <begin position="503"/>
        <end position="785"/>
    </location>
</feature>
<feature type="binding site" evidence="1">
    <location>
        <begin position="25"/>
        <end position="32"/>
    </location>
    <ligand>
        <name>ATP</name>
        <dbReference type="ChEBI" id="CHEBI:30616"/>
    </ligand>
</feature>